<dbReference type="EC" id="3.6.5.-" evidence="1"/>
<dbReference type="EMBL" id="BC113209">
    <property type="protein sequence ID" value="AAI13210.1"/>
    <property type="molecule type" value="mRNA"/>
</dbReference>
<dbReference type="RefSeq" id="NP_001070563.1">
    <property type="nucleotide sequence ID" value="NM_001077095.1"/>
</dbReference>
<dbReference type="SMR" id="Q2HJB8"/>
<dbReference type="FunCoup" id="Q2HJB8">
    <property type="interactions" value="720"/>
</dbReference>
<dbReference type="STRING" id="9913.ENSBTAP00000024663"/>
<dbReference type="PaxDb" id="9913-ENSBTAP00000024663"/>
<dbReference type="PeptideAtlas" id="Q2HJB8"/>
<dbReference type="Ensembl" id="ENSBTAT00000129247.1">
    <property type="protein sequence ID" value="ENSBTAP00000082738.1"/>
    <property type="gene ID" value="ENSBTAG00000018530.5"/>
</dbReference>
<dbReference type="GeneID" id="768036"/>
<dbReference type="KEGG" id="bta:768036"/>
<dbReference type="CTD" id="51807"/>
<dbReference type="VEuPathDB" id="HostDB:ENSBTAG00000018530"/>
<dbReference type="VGNC" id="VGNC:36504">
    <property type="gene designation" value="TUBA8"/>
</dbReference>
<dbReference type="eggNOG" id="KOG1376">
    <property type="taxonomic scope" value="Eukaryota"/>
</dbReference>
<dbReference type="GeneTree" id="ENSGT00940000159668"/>
<dbReference type="HOGENOM" id="CLU_015718_0_0_1"/>
<dbReference type="InParanoid" id="Q2HJB8"/>
<dbReference type="OMA" id="DGTMPTQ"/>
<dbReference type="OrthoDB" id="1662883at2759"/>
<dbReference type="TreeFam" id="TF300314"/>
<dbReference type="Reactome" id="R-BTA-190840">
    <property type="pathway name" value="Microtubule-dependent trafficking of connexons from Golgi to the plasma membrane"/>
</dbReference>
<dbReference type="Reactome" id="R-BTA-2132295">
    <property type="pathway name" value="MHC class II antigen presentation"/>
</dbReference>
<dbReference type="Reactome" id="R-BTA-2467813">
    <property type="pathway name" value="Separation of Sister Chromatids"/>
</dbReference>
<dbReference type="Reactome" id="R-BTA-2500257">
    <property type="pathway name" value="Resolution of Sister Chromatid Cohesion"/>
</dbReference>
<dbReference type="Reactome" id="R-BTA-3371497">
    <property type="pathway name" value="HSP90 chaperone cycle for steroid hormone receptors (SHR) in the presence of ligand"/>
</dbReference>
<dbReference type="Reactome" id="R-BTA-380320">
    <property type="pathway name" value="Recruitment of NuMA to mitotic centrosomes"/>
</dbReference>
<dbReference type="Reactome" id="R-BTA-5617833">
    <property type="pathway name" value="Cilium Assembly"/>
</dbReference>
<dbReference type="Reactome" id="R-BTA-5626467">
    <property type="pathway name" value="RHO GTPases activate IQGAPs"/>
</dbReference>
<dbReference type="Reactome" id="R-BTA-5663220">
    <property type="pathway name" value="RHO GTPases Activate Formins"/>
</dbReference>
<dbReference type="Reactome" id="R-BTA-6807878">
    <property type="pathway name" value="COPI-mediated anterograde transport"/>
</dbReference>
<dbReference type="Reactome" id="R-BTA-6811434">
    <property type="pathway name" value="COPI-dependent Golgi-to-ER retrograde traffic"/>
</dbReference>
<dbReference type="Reactome" id="R-BTA-6811436">
    <property type="pathway name" value="COPI-independent Golgi-to-ER retrograde traffic"/>
</dbReference>
<dbReference type="Reactome" id="R-BTA-68877">
    <property type="pathway name" value="Mitotic Prometaphase"/>
</dbReference>
<dbReference type="Reactome" id="R-BTA-8852276">
    <property type="pathway name" value="The role of GTSE1 in G2/M progression after G2 checkpoint"/>
</dbReference>
<dbReference type="Reactome" id="R-BTA-8955332">
    <property type="pathway name" value="Carboxyterminal post-translational modifications of tubulin"/>
</dbReference>
<dbReference type="Reactome" id="R-BTA-9646399">
    <property type="pathway name" value="Aggrephagy"/>
</dbReference>
<dbReference type="Reactome" id="R-BTA-9648025">
    <property type="pathway name" value="EML4 and NUDC in mitotic spindle formation"/>
</dbReference>
<dbReference type="Reactome" id="R-BTA-9668328">
    <property type="pathway name" value="Sealing of the nuclear envelope (NE) by ESCRT-III"/>
</dbReference>
<dbReference type="Reactome" id="R-BTA-983189">
    <property type="pathway name" value="Kinesins"/>
</dbReference>
<dbReference type="Proteomes" id="UP000009136">
    <property type="component" value="Chromosome 5"/>
</dbReference>
<dbReference type="Bgee" id="ENSBTAG00000018530">
    <property type="expression patterns" value="Expressed in choroid plexus and 90 other cell types or tissues"/>
</dbReference>
<dbReference type="GO" id="GO:0005737">
    <property type="term" value="C:cytoplasm"/>
    <property type="evidence" value="ECO:0000318"/>
    <property type="project" value="GO_Central"/>
</dbReference>
<dbReference type="GO" id="GO:0005874">
    <property type="term" value="C:microtubule"/>
    <property type="evidence" value="ECO:0000318"/>
    <property type="project" value="GO_Central"/>
</dbReference>
<dbReference type="GO" id="GO:0005525">
    <property type="term" value="F:GTP binding"/>
    <property type="evidence" value="ECO:0000318"/>
    <property type="project" value="GO_Central"/>
</dbReference>
<dbReference type="GO" id="GO:0016787">
    <property type="term" value="F:hydrolase activity"/>
    <property type="evidence" value="ECO:0007669"/>
    <property type="project" value="UniProtKB-KW"/>
</dbReference>
<dbReference type="GO" id="GO:0046872">
    <property type="term" value="F:metal ion binding"/>
    <property type="evidence" value="ECO:0007669"/>
    <property type="project" value="UniProtKB-KW"/>
</dbReference>
<dbReference type="GO" id="GO:0005200">
    <property type="term" value="F:structural constituent of cytoskeleton"/>
    <property type="evidence" value="ECO:0000318"/>
    <property type="project" value="GO_Central"/>
</dbReference>
<dbReference type="GO" id="GO:0000226">
    <property type="term" value="P:microtubule cytoskeleton organization"/>
    <property type="evidence" value="ECO:0000318"/>
    <property type="project" value="GO_Central"/>
</dbReference>
<dbReference type="GO" id="GO:0000278">
    <property type="term" value="P:mitotic cell cycle"/>
    <property type="evidence" value="ECO:0000318"/>
    <property type="project" value="GO_Central"/>
</dbReference>
<dbReference type="CDD" id="cd02186">
    <property type="entry name" value="alpha_tubulin"/>
    <property type="match status" value="1"/>
</dbReference>
<dbReference type="FunFam" id="1.10.287.600:FF:000005">
    <property type="entry name" value="Tubulin alpha chain"/>
    <property type="match status" value="1"/>
</dbReference>
<dbReference type="FunFam" id="3.30.1330.20:FF:000001">
    <property type="entry name" value="Tubulin alpha chain"/>
    <property type="match status" value="1"/>
</dbReference>
<dbReference type="FunFam" id="3.40.50.1440:FF:000002">
    <property type="entry name" value="Tubulin alpha chain"/>
    <property type="match status" value="1"/>
</dbReference>
<dbReference type="Gene3D" id="1.10.287.600">
    <property type="entry name" value="Helix hairpin bin"/>
    <property type="match status" value="1"/>
</dbReference>
<dbReference type="Gene3D" id="3.30.1330.20">
    <property type="entry name" value="Tubulin/FtsZ, C-terminal domain"/>
    <property type="match status" value="1"/>
</dbReference>
<dbReference type="Gene3D" id="3.40.50.1440">
    <property type="entry name" value="Tubulin/FtsZ, GTPase domain"/>
    <property type="match status" value="1"/>
</dbReference>
<dbReference type="InterPro" id="IPR002452">
    <property type="entry name" value="Alpha_tubulin"/>
</dbReference>
<dbReference type="InterPro" id="IPR008280">
    <property type="entry name" value="Tub_FtsZ_C"/>
</dbReference>
<dbReference type="InterPro" id="IPR000217">
    <property type="entry name" value="Tubulin"/>
</dbReference>
<dbReference type="InterPro" id="IPR037103">
    <property type="entry name" value="Tubulin/FtsZ-like_C"/>
</dbReference>
<dbReference type="InterPro" id="IPR018316">
    <property type="entry name" value="Tubulin/FtsZ_2-layer-sand-dom"/>
</dbReference>
<dbReference type="InterPro" id="IPR036525">
    <property type="entry name" value="Tubulin/FtsZ_GTPase_sf"/>
</dbReference>
<dbReference type="InterPro" id="IPR023123">
    <property type="entry name" value="Tubulin_C"/>
</dbReference>
<dbReference type="InterPro" id="IPR017975">
    <property type="entry name" value="Tubulin_CS"/>
</dbReference>
<dbReference type="InterPro" id="IPR003008">
    <property type="entry name" value="Tubulin_FtsZ_GTPase"/>
</dbReference>
<dbReference type="PANTHER" id="PTHR11588">
    <property type="entry name" value="TUBULIN"/>
    <property type="match status" value="1"/>
</dbReference>
<dbReference type="Pfam" id="PF00091">
    <property type="entry name" value="Tubulin"/>
    <property type="match status" value="1"/>
</dbReference>
<dbReference type="Pfam" id="PF03953">
    <property type="entry name" value="Tubulin_C"/>
    <property type="match status" value="1"/>
</dbReference>
<dbReference type="PRINTS" id="PR01162">
    <property type="entry name" value="ALPHATUBULIN"/>
</dbReference>
<dbReference type="PRINTS" id="PR01161">
    <property type="entry name" value="TUBULIN"/>
</dbReference>
<dbReference type="SMART" id="SM00864">
    <property type="entry name" value="Tubulin"/>
    <property type="match status" value="1"/>
</dbReference>
<dbReference type="SMART" id="SM00865">
    <property type="entry name" value="Tubulin_C"/>
    <property type="match status" value="1"/>
</dbReference>
<dbReference type="SUPFAM" id="SSF55307">
    <property type="entry name" value="Tubulin C-terminal domain-like"/>
    <property type="match status" value="1"/>
</dbReference>
<dbReference type="SUPFAM" id="SSF52490">
    <property type="entry name" value="Tubulin nucleotide-binding domain-like"/>
    <property type="match status" value="1"/>
</dbReference>
<dbReference type="PROSITE" id="PS00227">
    <property type="entry name" value="TUBULIN"/>
    <property type="match status" value="1"/>
</dbReference>
<sequence length="449" mass="50054">MRECISVHVGQAGVQIGNACWELFCLEHGIQADGTFGAQASKIHDDDSFTTFFSETGNGKHVPRAVMVDLEPTVVDEVRAGTYRHLFHPEQLITGKEDAANNYARGHYTVGKESIDLVLDRIRKLTDACSGLQGFLIFHSFGGGTGSGFTSLLMERLSLDYGKKSKLEFAIYPAPQVSTAVVEPYNSILTTHTTLEHSDCAFMVDNEAIYDICRRNLDIERPTYTNLNRLISQIVSSITASLRFDGALNVDLTEFQTNLVPYPRIHFPLVTYAPIISAEKAYHEQLSVAEITSSCFEPNSQMVKCDPRHGKYMACCMLYRGDVVPKDVNVAIAAIKTKRTIQFVDWCPTGFKVGINYQPPTVVPGGDLAKVQRAVCMLSNTTAIAEAWARLDHKFDLMYAKRAFVHWYVGEGMEEGEFSEAREDLAALEKDYEEVGTDSFEEENEGEEF</sequence>
<keyword id="KW-0963">Cytoplasm</keyword>
<keyword id="KW-0206">Cytoskeleton</keyword>
<keyword id="KW-0342">GTP-binding</keyword>
<keyword id="KW-0378">Hydrolase</keyword>
<keyword id="KW-0460">Magnesium</keyword>
<keyword id="KW-0479">Metal-binding</keyword>
<keyword id="KW-0493">Microtubule</keyword>
<keyword id="KW-0547">Nucleotide-binding</keyword>
<keyword id="KW-1185">Reference proteome</keyword>
<gene>
    <name type="primary">TUBA8</name>
</gene>
<feature type="chain" id="PRO_0000288850" description="Tubulin alpha-8 chain">
    <location>
        <begin position="1"/>
        <end position="449"/>
    </location>
</feature>
<feature type="chain" id="PRO_0000456433" description="Dephenylalaninated tubulin alpha-8 chain" evidence="4">
    <location>
        <begin position="1"/>
        <end position="448"/>
    </location>
</feature>
<feature type="short sequence motif" description="MREC motif" evidence="1">
    <location>
        <begin position="1"/>
        <end position="4"/>
    </location>
</feature>
<feature type="active site" evidence="1">
    <location>
        <position position="254"/>
    </location>
</feature>
<feature type="binding site" evidence="1">
    <location>
        <position position="11"/>
    </location>
    <ligand>
        <name>GTP</name>
        <dbReference type="ChEBI" id="CHEBI:37565"/>
    </ligand>
</feature>
<feature type="binding site" evidence="1">
    <location>
        <position position="71"/>
    </location>
    <ligand>
        <name>GTP</name>
        <dbReference type="ChEBI" id="CHEBI:37565"/>
    </ligand>
</feature>
<feature type="binding site" evidence="1">
    <location>
        <position position="71"/>
    </location>
    <ligand>
        <name>Mg(2+)</name>
        <dbReference type="ChEBI" id="CHEBI:18420"/>
    </ligand>
</feature>
<feature type="binding site" evidence="1">
    <location>
        <position position="140"/>
    </location>
    <ligand>
        <name>GTP</name>
        <dbReference type="ChEBI" id="CHEBI:37565"/>
    </ligand>
</feature>
<feature type="binding site" evidence="1">
    <location>
        <position position="144"/>
    </location>
    <ligand>
        <name>GTP</name>
        <dbReference type="ChEBI" id="CHEBI:37565"/>
    </ligand>
</feature>
<feature type="binding site" evidence="1">
    <location>
        <position position="145"/>
    </location>
    <ligand>
        <name>GTP</name>
        <dbReference type="ChEBI" id="CHEBI:37565"/>
    </ligand>
</feature>
<feature type="binding site" evidence="1">
    <location>
        <position position="179"/>
    </location>
    <ligand>
        <name>GTP</name>
        <dbReference type="ChEBI" id="CHEBI:37565"/>
    </ligand>
</feature>
<feature type="binding site" evidence="1">
    <location>
        <position position="206"/>
    </location>
    <ligand>
        <name>GTP</name>
        <dbReference type="ChEBI" id="CHEBI:37565"/>
    </ligand>
</feature>
<feature type="binding site" evidence="1">
    <location>
        <position position="228"/>
    </location>
    <ligand>
        <name>GTP</name>
        <dbReference type="ChEBI" id="CHEBI:37565"/>
    </ligand>
</feature>
<protein>
    <recommendedName>
        <fullName>Tubulin alpha-8 chain</fullName>
        <ecNumber evidence="1">3.6.5.-</ecNumber>
    </recommendedName>
    <alternativeName>
        <fullName>Alpha-tubulin 8</fullName>
    </alternativeName>
    <component>
        <recommendedName>
            <fullName>Dephenylalaninated tubulin alpha-8 chain</fullName>
        </recommendedName>
    </component>
</protein>
<organism>
    <name type="scientific">Bos taurus</name>
    <name type="common">Bovine</name>
    <dbReference type="NCBI Taxonomy" id="9913"/>
    <lineage>
        <taxon>Eukaryota</taxon>
        <taxon>Metazoa</taxon>
        <taxon>Chordata</taxon>
        <taxon>Craniata</taxon>
        <taxon>Vertebrata</taxon>
        <taxon>Euteleostomi</taxon>
        <taxon>Mammalia</taxon>
        <taxon>Eutheria</taxon>
        <taxon>Laurasiatheria</taxon>
        <taxon>Artiodactyla</taxon>
        <taxon>Ruminantia</taxon>
        <taxon>Pecora</taxon>
        <taxon>Bovidae</taxon>
        <taxon>Bovinae</taxon>
        <taxon>Bos</taxon>
    </lineage>
</organism>
<name>TBA8_BOVIN</name>
<proteinExistence type="evidence at protein level"/>
<reference key="1">
    <citation type="submission" date="2006-02" db="EMBL/GenBank/DDBJ databases">
        <authorList>
            <consortium name="NIH - Mammalian Gene Collection (MGC) project"/>
        </authorList>
    </citation>
    <scope>NUCLEOTIDE SEQUENCE [LARGE SCALE MRNA]</scope>
    <source>
        <strain>Hereford</strain>
        <tissue>Uterus</tissue>
    </source>
</reference>
<reference key="2">
    <citation type="journal article" date="1984" name="Nature">
        <title>Dynamic instability of microtubule growth.</title>
        <authorList>
            <person name="Mitchison T."/>
            <person name="Kirschner M."/>
        </authorList>
    </citation>
    <scope>FUNCTION</scope>
    <scope>SUBUNIT</scope>
    <scope>SUBCELLULAR LOCATION</scope>
</reference>
<reference key="3">
    <citation type="journal article" date="1990" name="Biochemistry">
        <title>Role of GTP hydrolysis in microtubule polymerization: evidence for a coupled hydrolysis mechanism.</title>
        <authorList>
            <person name="Stewart R.J."/>
            <person name="Farrell K.W."/>
            <person name="Wilson L."/>
        </authorList>
    </citation>
    <scope>FUNCTION</scope>
    <scope>SUBUNIT</scope>
    <scope>SUBCELLULAR LOCATION</scope>
</reference>
<reference key="4">
    <citation type="journal article" date="1994" name="Curr. Biol.">
        <title>The minimum GTP cap required to stabilize microtubules.</title>
        <authorList>
            <person name="Drechsel D.N."/>
            <person name="Kirschner M.W."/>
        </authorList>
    </citation>
    <scope>FUNCTION</scope>
    <scope>SUBUNIT</scope>
    <scope>SUBCELLULAR LOCATION</scope>
</reference>
<accession>Q2HJB8</accession>
<comment type="function">
    <text evidence="5 6 7">Tubulin is the major constituent of microtubules, a cylinder consisting of laterally associated linear protofilaments composed of alpha- and beta-tubulin heterodimers (PubMed:2207090, PubMed:6504138, PubMed:7704569). Microtubules grow by the addition of GTP-tubulin dimers to the microtubule end, where a stabilizing cap forms. Below the cap, tubulin dimers are in GDP-bound state, owing to GTPase activity of alpha-tubulin (PubMed:2207090, PubMed:6504138, PubMed:7704569).</text>
</comment>
<comment type="catalytic activity">
    <reaction evidence="1">
        <text>GTP + H2O = GDP + phosphate + H(+)</text>
        <dbReference type="Rhea" id="RHEA:19669"/>
        <dbReference type="ChEBI" id="CHEBI:15377"/>
        <dbReference type="ChEBI" id="CHEBI:15378"/>
        <dbReference type="ChEBI" id="CHEBI:37565"/>
        <dbReference type="ChEBI" id="CHEBI:43474"/>
        <dbReference type="ChEBI" id="CHEBI:58189"/>
    </reaction>
    <physiologicalReaction direction="left-to-right" evidence="1">
        <dbReference type="Rhea" id="RHEA:19670"/>
    </physiologicalReaction>
</comment>
<comment type="cofactor">
    <cofactor evidence="1">
        <name>Mg(2+)</name>
        <dbReference type="ChEBI" id="CHEBI:18420"/>
    </cofactor>
</comment>
<comment type="subunit">
    <text evidence="5 6 7">Dimer of alpha and beta chains (PubMed:2207090, PubMed:6504138, PubMed:7704569). A typical microtubule is a hollow water-filled tube with an outer diameter of 25 nm and an inner diameter of 15 nM. Alpha-beta heterodimers associate head-to-tail to form protofilaments running lengthwise along the microtubule wall with the beta-tubulin subunit facing the microtubule plus end conferring a structural polarity. Microtubules usually have 13 protofilaments but different protofilament numbers can be found in some organisms and specialized cells.</text>
</comment>
<comment type="subcellular location">
    <subcellularLocation>
        <location evidence="5 6 7">Cytoplasm</location>
        <location evidence="5 6 7">Cytoskeleton</location>
    </subcellularLocation>
</comment>
<comment type="domain">
    <text evidence="1">The MREC motif may be critical for tubulin autoregulation.</text>
</comment>
<comment type="PTM">
    <text evidence="3">Some glutamate residues at the C-terminus are polyglycylated, resulting in polyglycine chains on the gamma-carboxyl group. Glycylation is mainly limited to tubulin incorporated into axonemes (cilia and flagella) whereas glutamylation is prevalent in neuronal cells, centrioles, axonemes, and the mitotic spindle. Both modifications can coexist on the same protein on adjacent residues, and lowering polyglycylation levels increases polyglutamylation, and reciprocally. Cilia and flagella glycylation is required for their stability and maintenance. Flagella glycylation controls sperm motility.</text>
</comment>
<comment type="PTM">
    <text evidence="2 3">Some glutamate residues at the C-terminus are polyglutamylated, resulting in polyglutamate chains on the gamma-carboxyl group (By similarity). Polyglutamylation plays a key role in microtubule severing by spastin (SPAST). SPAST preferentially recognizes and acts on microtubules decorated with short polyglutamate tails: severing activity by SPAST increases as the number of glutamates per tubulin rises from one to eight, but decreases beyond this glutamylation threshold (By similarity). Glutamylation is also involved in cilia motility (By similarity).</text>
</comment>
<comment type="PTM">
    <text evidence="4">The C-terminal phenylalanine residue is cleaved by MATCAP1/KIAA0895L.</text>
</comment>
<comment type="miscellaneous">
    <text evidence="4">This tubulin does not have a C-terminal tyrosine; however, its C-terminal phenylalanine residue can be cleaved.</text>
</comment>
<comment type="similarity">
    <text evidence="8">Belongs to the tubulin family.</text>
</comment>
<evidence type="ECO:0000250" key="1">
    <source>
        <dbReference type="UniProtKB" id="P68363"/>
    </source>
</evidence>
<evidence type="ECO:0000250" key="2">
    <source>
        <dbReference type="UniProtKB" id="Q71U36"/>
    </source>
</evidence>
<evidence type="ECO:0000250" key="3">
    <source>
        <dbReference type="UniProtKB" id="Q9JJZ2"/>
    </source>
</evidence>
<evidence type="ECO:0000250" key="4">
    <source>
        <dbReference type="UniProtKB" id="Q9NY65"/>
    </source>
</evidence>
<evidence type="ECO:0000269" key="5">
    <source>
    </source>
</evidence>
<evidence type="ECO:0000269" key="6">
    <source>
    </source>
</evidence>
<evidence type="ECO:0000269" key="7">
    <source>
    </source>
</evidence>
<evidence type="ECO:0000305" key="8"/>